<proteinExistence type="evidence at protein level"/>
<protein>
    <recommendedName>
        <fullName evidence="5">Oligopeptide transport system permease protein OppC</fullName>
    </recommendedName>
</protein>
<dbReference type="EMBL" id="U00096">
    <property type="protein sequence ID" value="AAC74327.1"/>
    <property type="molecule type" value="Genomic_DNA"/>
</dbReference>
<dbReference type="EMBL" id="AP009048">
    <property type="protein sequence ID" value="BAA14777.1"/>
    <property type="molecule type" value="Genomic_DNA"/>
</dbReference>
<dbReference type="PIR" id="H64871">
    <property type="entry name" value="H64871"/>
</dbReference>
<dbReference type="RefSeq" id="NP_415761.1">
    <property type="nucleotide sequence ID" value="NC_000913.3"/>
</dbReference>
<dbReference type="RefSeq" id="WP_000979661.1">
    <property type="nucleotide sequence ID" value="NZ_STEB01000005.1"/>
</dbReference>
<dbReference type="SMR" id="P0AFH6"/>
<dbReference type="BioGRID" id="4261369">
    <property type="interactions" value="446"/>
</dbReference>
<dbReference type="ComplexPortal" id="CPX-4343">
    <property type="entry name" value="Murein tripeptide ABC transporter complex"/>
</dbReference>
<dbReference type="ComplexPortal" id="CPX-4344">
    <property type="entry name" value="Oligopeptide ABC transporter complex"/>
</dbReference>
<dbReference type="FunCoup" id="P0AFH6">
    <property type="interactions" value="418"/>
</dbReference>
<dbReference type="STRING" id="511145.b1245"/>
<dbReference type="TCDB" id="3.A.1.5.41">
    <property type="family name" value="the atp-binding cassette (abc) superfamily"/>
</dbReference>
<dbReference type="jPOST" id="P0AFH6"/>
<dbReference type="PaxDb" id="511145-b1245"/>
<dbReference type="EnsemblBacteria" id="AAC74327">
    <property type="protein sequence ID" value="AAC74327"/>
    <property type="gene ID" value="b1245"/>
</dbReference>
<dbReference type="GeneID" id="93775310"/>
<dbReference type="GeneID" id="945810"/>
<dbReference type="KEGG" id="ecj:JW1237"/>
<dbReference type="KEGG" id="eco:b1245"/>
<dbReference type="KEGG" id="ecoc:C3026_07315"/>
<dbReference type="PATRIC" id="fig|1411691.4.peg.1038"/>
<dbReference type="EchoBASE" id="EB0670"/>
<dbReference type="eggNOG" id="COG1173">
    <property type="taxonomic scope" value="Bacteria"/>
</dbReference>
<dbReference type="HOGENOM" id="CLU_028518_1_3_6"/>
<dbReference type="InParanoid" id="P0AFH6"/>
<dbReference type="OMA" id="IAWKHLV"/>
<dbReference type="OrthoDB" id="9805884at2"/>
<dbReference type="PhylomeDB" id="P0AFH6"/>
<dbReference type="BioCyc" id="EcoCyc:OPPC-MONOMER"/>
<dbReference type="BioCyc" id="MetaCyc:OPPC-MONOMER"/>
<dbReference type="PRO" id="PR:P0AFH6"/>
<dbReference type="Proteomes" id="UP000000625">
    <property type="component" value="Chromosome"/>
</dbReference>
<dbReference type="GO" id="GO:0055052">
    <property type="term" value="C:ATP-binding cassette (ABC) transporter complex, substrate-binding subunit-containing"/>
    <property type="evidence" value="ECO:0000303"/>
    <property type="project" value="ComplexPortal"/>
</dbReference>
<dbReference type="GO" id="GO:0016020">
    <property type="term" value="C:membrane"/>
    <property type="evidence" value="ECO:0000303"/>
    <property type="project" value="ComplexPortal"/>
</dbReference>
<dbReference type="GO" id="GO:0005886">
    <property type="term" value="C:plasma membrane"/>
    <property type="evidence" value="ECO:0000314"/>
    <property type="project" value="EcoCyc"/>
</dbReference>
<dbReference type="GO" id="GO:0015640">
    <property type="term" value="F:peptidoglycan peptide transmembrane transporter activity"/>
    <property type="evidence" value="ECO:0000269"/>
    <property type="project" value="EcoCyc"/>
</dbReference>
<dbReference type="GO" id="GO:0140205">
    <property type="term" value="P:oligopeptide import across plasma membrane"/>
    <property type="evidence" value="ECO:0000303"/>
    <property type="project" value="ComplexPortal"/>
</dbReference>
<dbReference type="GO" id="GO:0015834">
    <property type="term" value="P:peptidoglycan-associated peptide transport"/>
    <property type="evidence" value="ECO:0000269"/>
    <property type="project" value="EcoCyc"/>
</dbReference>
<dbReference type="GO" id="GO:0015031">
    <property type="term" value="P:protein transport"/>
    <property type="evidence" value="ECO:0007669"/>
    <property type="project" value="UniProtKB-KW"/>
</dbReference>
<dbReference type="GO" id="GO:0140207">
    <property type="term" value="P:tripeptide import across plasma membrane"/>
    <property type="evidence" value="ECO:0000303"/>
    <property type="project" value="ComplexPortal"/>
</dbReference>
<dbReference type="CDD" id="cd06261">
    <property type="entry name" value="TM_PBP2"/>
    <property type="match status" value="1"/>
</dbReference>
<dbReference type="FunFam" id="1.10.3720.10:FF:000008">
    <property type="entry name" value="Oligopeptide ABC transporter permease OppC"/>
    <property type="match status" value="1"/>
</dbReference>
<dbReference type="Gene3D" id="1.10.3720.10">
    <property type="entry name" value="MetI-like"/>
    <property type="match status" value="1"/>
</dbReference>
<dbReference type="InterPro" id="IPR050366">
    <property type="entry name" value="BP-dependent_transpt_permease"/>
</dbReference>
<dbReference type="InterPro" id="IPR000515">
    <property type="entry name" value="MetI-like"/>
</dbReference>
<dbReference type="InterPro" id="IPR035906">
    <property type="entry name" value="MetI-like_sf"/>
</dbReference>
<dbReference type="InterPro" id="IPR025966">
    <property type="entry name" value="OppC_N"/>
</dbReference>
<dbReference type="NCBIfam" id="NF011935">
    <property type="entry name" value="PRK15406.1"/>
    <property type="match status" value="1"/>
</dbReference>
<dbReference type="PANTHER" id="PTHR43386">
    <property type="entry name" value="OLIGOPEPTIDE TRANSPORT SYSTEM PERMEASE PROTEIN APPC"/>
    <property type="match status" value="1"/>
</dbReference>
<dbReference type="PANTHER" id="PTHR43386:SF2">
    <property type="entry name" value="OLIGOPEPTIDE TRANSPORT SYSTEM PERMEASE PROTEIN OPPC"/>
    <property type="match status" value="1"/>
</dbReference>
<dbReference type="Pfam" id="PF00528">
    <property type="entry name" value="BPD_transp_1"/>
    <property type="match status" value="1"/>
</dbReference>
<dbReference type="Pfam" id="PF12911">
    <property type="entry name" value="OppC_N"/>
    <property type="match status" value="1"/>
</dbReference>
<dbReference type="SUPFAM" id="SSF161098">
    <property type="entry name" value="MetI-like"/>
    <property type="match status" value="1"/>
</dbReference>
<dbReference type="PROSITE" id="PS50928">
    <property type="entry name" value="ABC_TM1"/>
    <property type="match status" value="1"/>
</dbReference>
<gene>
    <name type="primary">oppC</name>
    <name type="ordered locus">b1245</name>
    <name type="ordered locus">JW1237</name>
</gene>
<evidence type="ECO:0000255" key="1"/>
<evidence type="ECO:0000255" key="2">
    <source>
        <dbReference type="PROSITE-ProRule" id="PRU00441"/>
    </source>
</evidence>
<evidence type="ECO:0000269" key="3">
    <source>
    </source>
</evidence>
<evidence type="ECO:0000269" key="4">
    <source>
    </source>
</evidence>
<evidence type="ECO:0000305" key="5"/>
<evidence type="ECO:0000305" key="6">
    <source>
    </source>
</evidence>
<comment type="function">
    <text evidence="4 5">Part of the ABC transporter complex OppABCDF involved in the uptake of oligopeptides and of the ABC transporter complex MppA-OppBCDF involved in the uptake of the cell wall murein tripeptide L-alanyl-gamma-D-glutamyl-meso-diaminopimelate (PubMed:9495761). Probably responsible for the translocation of the substrate across the membrane (Probable). Plays an important nutritional role and is involved in the recycling of cell wall peptides (PubMed:9495761).</text>
</comment>
<comment type="subunit">
    <text evidence="6">The complex is composed of two ATP-binding proteins (OppD and OppF), two transmembrane proteins (OppB and OppC) and a solute-binding protein (OppA or MppA).</text>
</comment>
<comment type="subcellular location">
    <subcellularLocation>
        <location evidence="3">Cell inner membrane</location>
        <topology evidence="1">Multi-pass membrane protein</topology>
    </subcellularLocation>
</comment>
<comment type="similarity">
    <text evidence="5">Belongs to the binding-protein-dependent transport system permease family. OppBC subfamily.</text>
</comment>
<organism>
    <name type="scientific">Escherichia coli (strain K12)</name>
    <dbReference type="NCBI Taxonomy" id="83333"/>
    <lineage>
        <taxon>Bacteria</taxon>
        <taxon>Pseudomonadati</taxon>
        <taxon>Pseudomonadota</taxon>
        <taxon>Gammaproteobacteria</taxon>
        <taxon>Enterobacterales</taxon>
        <taxon>Enterobacteriaceae</taxon>
        <taxon>Escherichia</taxon>
    </lineage>
</organism>
<sequence>MMLSKKNSETLENFSEKLEVEGRSLWQDARRRFMHNRAAVASLIVLVLIALFVILAPMLSQFAYDDTDWAMMSSAPDMESGHYFGTDSSGRDLLVRVAIGGRISLMVGVAAALVAVVVGTLYGSLSGYLGGKVDSVMMRLLEILNSFPFMFFVILLVTFFGQNILLIFVAIGMVSWLDMARIVRGQTLSLKRKEFIEAAQVGGVSTSGIVIRHIVPNVLGVVVVYASLLVPSMILFESFLSFLGLGTQEPLSSWGALLSDGANSMEVSPWLLLFPAGFLVVTLFCFNFIGDGLRDALDPKDR</sequence>
<reference key="1">
    <citation type="journal article" date="1996" name="DNA Res.">
        <title>A 570-kb DNA sequence of the Escherichia coli K-12 genome corresponding to the 28.0-40.1 min region on the linkage map.</title>
        <authorList>
            <person name="Aiba H."/>
            <person name="Baba T."/>
            <person name="Fujita K."/>
            <person name="Hayashi K."/>
            <person name="Inada T."/>
            <person name="Isono K."/>
            <person name="Itoh T."/>
            <person name="Kasai H."/>
            <person name="Kashimoto K."/>
            <person name="Kimura S."/>
            <person name="Kitakawa M."/>
            <person name="Kitagawa M."/>
            <person name="Makino K."/>
            <person name="Miki T."/>
            <person name="Mizobuchi K."/>
            <person name="Mori H."/>
            <person name="Mori T."/>
            <person name="Motomura K."/>
            <person name="Nakade S."/>
            <person name="Nakamura Y."/>
            <person name="Nashimoto H."/>
            <person name="Nishio Y."/>
            <person name="Oshima T."/>
            <person name="Saito N."/>
            <person name="Sampei G."/>
            <person name="Seki Y."/>
            <person name="Sivasundaram S."/>
            <person name="Tagami H."/>
            <person name="Takeda J."/>
            <person name="Takemoto K."/>
            <person name="Takeuchi Y."/>
            <person name="Wada C."/>
            <person name="Yamamoto Y."/>
            <person name="Horiuchi T."/>
        </authorList>
    </citation>
    <scope>NUCLEOTIDE SEQUENCE [LARGE SCALE GENOMIC DNA]</scope>
    <source>
        <strain>K12 / W3110 / ATCC 27325 / DSM 5911</strain>
    </source>
</reference>
<reference key="2">
    <citation type="journal article" date="1997" name="Science">
        <title>The complete genome sequence of Escherichia coli K-12.</title>
        <authorList>
            <person name="Blattner F.R."/>
            <person name="Plunkett G. III"/>
            <person name="Bloch C.A."/>
            <person name="Perna N.T."/>
            <person name="Burland V."/>
            <person name="Riley M."/>
            <person name="Collado-Vides J."/>
            <person name="Glasner J.D."/>
            <person name="Rode C.K."/>
            <person name="Mayhew G.F."/>
            <person name="Gregor J."/>
            <person name="Davis N.W."/>
            <person name="Kirkpatrick H.A."/>
            <person name="Goeden M.A."/>
            <person name="Rose D.J."/>
            <person name="Mau B."/>
            <person name="Shao Y."/>
        </authorList>
    </citation>
    <scope>NUCLEOTIDE SEQUENCE [LARGE SCALE GENOMIC DNA]</scope>
    <source>
        <strain>K12 / MG1655 / ATCC 47076</strain>
    </source>
</reference>
<reference key="3">
    <citation type="journal article" date="2006" name="Mol. Syst. Biol.">
        <title>Highly accurate genome sequences of Escherichia coli K-12 strains MG1655 and W3110.</title>
        <authorList>
            <person name="Hayashi K."/>
            <person name="Morooka N."/>
            <person name="Yamamoto Y."/>
            <person name="Fujita K."/>
            <person name="Isono K."/>
            <person name="Choi S."/>
            <person name="Ohtsubo E."/>
            <person name="Baba T."/>
            <person name="Wanner B.L."/>
            <person name="Mori H."/>
            <person name="Horiuchi T."/>
        </authorList>
    </citation>
    <scope>NUCLEOTIDE SEQUENCE [LARGE SCALE GENOMIC DNA]</scope>
    <source>
        <strain>K12 / W3110 / ATCC 27325 / DSM 5911</strain>
    </source>
</reference>
<reference key="4">
    <citation type="journal article" date="1998" name="J. Bacteriol.">
        <title>MppA, a periplasmic binding protein essential for import of the bacterial cell wall peptide L-alanyl-gamma-D-glutamyl-meso-diaminopimelate.</title>
        <authorList>
            <person name="Park J.T."/>
            <person name="Raychaudhuri D."/>
            <person name="Li H."/>
            <person name="Normark S."/>
            <person name="Mengin-Lecreulx D."/>
        </authorList>
    </citation>
    <scope>FUNCTION</scope>
    <scope>SUBUNIT</scope>
    <source>
        <strain>K12 / AT980</strain>
    </source>
</reference>
<reference key="5">
    <citation type="journal article" date="2005" name="Science">
        <title>Global topology analysis of the Escherichia coli inner membrane proteome.</title>
        <authorList>
            <person name="Daley D.O."/>
            <person name="Rapp M."/>
            <person name="Granseth E."/>
            <person name="Melen K."/>
            <person name="Drew D."/>
            <person name="von Heijne G."/>
        </authorList>
    </citation>
    <scope>TOPOLOGY [LARGE SCALE ANALYSIS]</scope>
    <scope>SUBCELLULAR LOCATION</scope>
    <source>
        <strain>K12 / MG1655 / ATCC 47076</strain>
    </source>
</reference>
<name>OPPC_ECOLI</name>
<feature type="chain" id="PRO_0000060149" description="Oligopeptide transport system permease protein OppC">
    <location>
        <begin position="1"/>
        <end position="302"/>
    </location>
</feature>
<feature type="topological domain" description="Cytoplasmic" evidence="5">
    <location>
        <begin position="1"/>
        <end position="38"/>
    </location>
</feature>
<feature type="transmembrane region" description="Helical" evidence="1">
    <location>
        <begin position="39"/>
        <end position="59"/>
    </location>
</feature>
<feature type="topological domain" description="Periplasmic" evidence="5">
    <location>
        <begin position="60"/>
        <end position="102"/>
    </location>
</feature>
<feature type="transmembrane region" description="Helical" evidence="1">
    <location>
        <begin position="103"/>
        <end position="123"/>
    </location>
</feature>
<feature type="topological domain" description="Cytoplasmic" evidence="5">
    <location>
        <begin position="124"/>
        <end position="137"/>
    </location>
</feature>
<feature type="transmembrane region" description="Helical" evidence="1">
    <location>
        <begin position="138"/>
        <end position="160"/>
    </location>
</feature>
<feature type="topological domain" description="Periplasmic" evidence="5">
    <location>
        <begin position="161"/>
        <end position="163"/>
    </location>
</feature>
<feature type="transmembrane region" description="Helical" evidence="1">
    <location>
        <begin position="164"/>
        <end position="183"/>
    </location>
</feature>
<feature type="topological domain" description="Cytoplasmic" evidence="5">
    <location>
        <begin position="184"/>
        <end position="213"/>
    </location>
</feature>
<feature type="transmembrane region" description="Helical" evidence="1">
    <location>
        <begin position="214"/>
        <end position="234"/>
    </location>
</feature>
<feature type="topological domain" description="Periplasmic" evidence="5">
    <location>
        <begin position="235"/>
        <end position="269"/>
    </location>
</feature>
<feature type="transmembrane region" description="Helical" evidence="1">
    <location>
        <begin position="270"/>
        <end position="290"/>
    </location>
</feature>
<feature type="topological domain" description="Cytoplasmic" evidence="3">
    <location>
        <begin position="291"/>
        <end position="302"/>
    </location>
</feature>
<feature type="domain" description="ABC transmembrane type-1" evidence="2">
    <location>
        <begin position="101"/>
        <end position="290"/>
    </location>
</feature>
<keyword id="KW-0997">Cell inner membrane</keyword>
<keyword id="KW-1003">Cell membrane</keyword>
<keyword id="KW-0472">Membrane</keyword>
<keyword id="KW-0571">Peptide transport</keyword>
<keyword id="KW-0653">Protein transport</keyword>
<keyword id="KW-1185">Reference proteome</keyword>
<keyword id="KW-0812">Transmembrane</keyword>
<keyword id="KW-1133">Transmembrane helix</keyword>
<keyword id="KW-0813">Transport</keyword>
<accession>P0AFH6</accession>
<accession>P77664</accession>